<sequence>MWKRLLIVSAVSAAMSSMALAAPLTVGFSQVGSESGWRAAETNVAKSEAEKRGITLKIADGQQKQENQIKAVRSFVAQGVDAIFIAPVVATGWEPVLKEAKDAEIPVFLLDRSIDVKDKSLYMTTVTADNILEGKLIGDWLVKEVNGKPCNVVELQGTVGASVAIDRKKGFAEAIKNAPNIKIIRSQSGDFTRSKGKEVMESFIKAENNGKNICMVYAHNDDMVIGAIQAIKEAGLKPGKDILTGSIDGVPDIYKAMMDGEANASVELTPNMAGPAFDALEKYKKDGTMPEKLTLTKSTLYLPDTAKEELEKKKNMGY</sequence>
<keyword id="KW-0002">3D-structure</keyword>
<keyword id="KW-0903">Direct protein sequencing</keyword>
<keyword id="KW-1015">Disulfide bond</keyword>
<keyword id="KW-0574">Periplasm</keyword>
<keyword id="KW-1185">Reference proteome</keyword>
<keyword id="KW-0732">Signal</keyword>
<keyword id="KW-0762">Sugar transport</keyword>
<keyword id="KW-0813">Transport</keyword>
<dbReference type="EMBL" id="U14003">
    <property type="protein sequence ID" value="AAA97124.1"/>
    <property type="molecule type" value="Genomic_DNA"/>
</dbReference>
<dbReference type="EMBL" id="U00096">
    <property type="protein sequence ID" value="AAC77184.1"/>
    <property type="molecule type" value="Genomic_DNA"/>
</dbReference>
<dbReference type="EMBL" id="AP009048">
    <property type="protein sequence ID" value="BAE78228.1"/>
    <property type="molecule type" value="Genomic_DNA"/>
</dbReference>
<dbReference type="PIR" id="S56453">
    <property type="entry name" value="S56453"/>
</dbReference>
<dbReference type="RefSeq" id="NP_418648.1">
    <property type="nucleotide sequence ID" value="NC_000913.3"/>
</dbReference>
<dbReference type="RefSeq" id="WP_000265913.1">
    <property type="nucleotide sequence ID" value="NZ_LN832404.1"/>
</dbReference>
<dbReference type="PDB" id="2VK2">
    <property type="method" value="X-ray"/>
    <property type="resolution" value="1.20 A"/>
    <property type="chains" value="A=22-318"/>
</dbReference>
<dbReference type="PDBsum" id="2VK2"/>
<dbReference type="SMR" id="P39325"/>
<dbReference type="BioGRID" id="4259313">
    <property type="interactions" value="10"/>
</dbReference>
<dbReference type="BioGRID" id="853035">
    <property type="interactions" value="7"/>
</dbReference>
<dbReference type="ComplexPortal" id="CPX-4323">
    <property type="entry name" value="Galactofuranose ABC transporter complex"/>
</dbReference>
<dbReference type="FunCoup" id="P39325">
    <property type="interactions" value="197"/>
</dbReference>
<dbReference type="IntAct" id="P39325">
    <property type="interactions" value="8"/>
</dbReference>
<dbReference type="STRING" id="511145.b4227"/>
<dbReference type="TCDB" id="3.A.1.2.25">
    <property type="family name" value="the atp-binding cassette (abc) superfamily"/>
</dbReference>
<dbReference type="jPOST" id="P39325"/>
<dbReference type="PaxDb" id="511145-b4227"/>
<dbReference type="EnsemblBacteria" id="AAC77184">
    <property type="protein sequence ID" value="AAC77184"/>
    <property type="gene ID" value="b4227"/>
</dbReference>
<dbReference type="GeneID" id="948746"/>
<dbReference type="KEGG" id="ecj:JW4186"/>
<dbReference type="KEGG" id="eco:b4227"/>
<dbReference type="KEGG" id="ecoc:C3026_22825"/>
<dbReference type="PATRIC" id="fig|1411691.4.peg.2474"/>
<dbReference type="EchoBASE" id="EB2409"/>
<dbReference type="eggNOG" id="COG1879">
    <property type="taxonomic scope" value="Bacteria"/>
</dbReference>
<dbReference type="HOGENOM" id="CLU_037628_3_2_6"/>
<dbReference type="InParanoid" id="P39325"/>
<dbReference type="OMA" id="EWRTANT"/>
<dbReference type="OrthoDB" id="9813037at2"/>
<dbReference type="PhylomeDB" id="P39325"/>
<dbReference type="BioCyc" id="EcoCyc:YTFQ-MONOMER"/>
<dbReference type="BioCyc" id="MetaCyc:YTFQ-MONOMER"/>
<dbReference type="BRENDA" id="7.5.2.9">
    <property type="organism ID" value="2026"/>
</dbReference>
<dbReference type="EvolutionaryTrace" id="P39325"/>
<dbReference type="PRO" id="PR:P39325"/>
<dbReference type="Proteomes" id="UP000000625">
    <property type="component" value="Chromosome"/>
</dbReference>
<dbReference type="GO" id="GO:0055052">
    <property type="term" value="C:ATP-binding cassette (ABC) transporter complex, substrate-binding subunit-containing"/>
    <property type="evidence" value="ECO:0000303"/>
    <property type="project" value="ComplexPortal"/>
</dbReference>
<dbReference type="GO" id="GO:0030288">
    <property type="term" value="C:outer membrane-bounded periplasmic space"/>
    <property type="evidence" value="ECO:0000314"/>
    <property type="project" value="EcoCyc"/>
</dbReference>
<dbReference type="GO" id="GO:0005534">
    <property type="term" value="F:galactose binding"/>
    <property type="evidence" value="ECO:0000314"/>
    <property type="project" value="EcoCyc"/>
</dbReference>
<dbReference type="GO" id="GO:0048029">
    <property type="term" value="F:monosaccharide binding"/>
    <property type="evidence" value="ECO:0000318"/>
    <property type="project" value="GO_Central"/>
</dbReference>
<dbReference type="GO" id="GO:0015757">
    <property type="term" value="P:galactose transmembrane transport"/>
    <property type="evidence" value="ECO:0000314"/>
    <property type="project" value="EcoCyc"/>
</dbReference>
<dbReference type="GO" id="GO:0140271">
    <property type="term" value="P:hexose import across plasma membrane"/>
    <property type="evidence" value="ECO:0000303"/>
    <property type="project" value="ComplexPortal"/>
</dbReference>
<dbReference type="CDD" id="cd06309">
    <property type="entry name" value="PBP1_galactofuranose_YtfQ-like"/>
    <property type="match status" value="1"/>
</dbReference>
<dbReference type="FunFam" id="3.40.50.2300:FF:000079">
    <property type="entry name" value="ABC transporter periplasmic-binding protein ytfQ"/>
    <property type="match status" value="1"/>
</dbReference>
<dbReference type="Gene3D" id="3.40.50.2300">
    <property type="match status" value="2"/>
</dbReference>
<dbReference type="InterPro" id="IPR028082">
    <property type="entry name" value="Peripla_BP_I"/>
</dbReference>
<dbReference type="InterPro" id="IPR025997">
    <property type="entry name" value="SBP_2_dom"/>
</dbReference>
<dbReference type="InterPro" id="IPR054837">
    <property type="entry name" value="YtfQ_transport"/>
</dbReference>
<dbReference type="NCBIfam" id="NF041827">
    <property type="entry name" value="YtfQ_transport"/>
    <property type="match status" value="1"/>
</dbReference>
<dbReference type="PANTHER" id="PTHR46847">
    <property type="entry name" value="D-ALLOSE-BINDING PERIPLASMIC PROTEIN-RELATED"/>
    <property type="match status" value="1"/>
</dbReference>
<dbReference type="PANTHER" id="PTHR46847:SF3">
    <property type="entry name" value="GALACTOFURANOSE-BINDING PROTEIN YTFQ"/>
    <property type="match status" value="1"/>
</dbReference>
<dbReference type="Pfam" id="PF13407">
    <property type="entry name" value="Peripla_BP_4"/>
    <property type="match status" value="1"/>
</dbReference>
<dbReference type="SUPFAM" id="SSF53822">
    <property type="entry name" value="Periplasmic binding protein-like I"/>
    <property type="match status" value="1"/>
</dbReference>
<feature type="signal peptide" evidence="2">
    <location>
        <begin position="1"/>
        <end position="21"/>
    </location>
</feature>
<feature type="chain" id="PRO_0000031745" description="Galactofuranose-binding protein YtfQ">
    <location>
        <begin position="22"/>
        <end position="318"/>
    </location>
</feature>
<feature type="binding site" evidence="1 5">
    <location>
        <begin position="34"/>
        <end position="38"/>
    </location>
    <ligand>
        <name>beta-D-galactofuranose</name>
        <dbReference type="ChEBI" id="CHEBI:59497"/>
    </ligand>
</feature>
<feature type="binding site" evidence="1 5">
    <location>
        <begin position="111"/>
        <end position="112"/>
    </location>
    <ligand>
        <name>beta-D-galactofuranose</name>
        <dbReference type="ChEBI" id="CHEBI:59497"/>
    </ligand>
</feature>
<feature type="binding site" evidence="1 5">
    <location>
        <position position="167"/>
    </location>
    <ligand>
        <name>beta-D-galactofuranose</name>
        <dbReference type="ChEBI" id="CHEBI:59497"/>
    </ligand>
</feature>
<feature type="binding site" evidence="1 5">
    <location>
        <position position="220"/>
    </location>
    <ligand>
        <name>beta-D-galactofuranose</name>
        <dbReference type="ChEBI" id="CHEBI:59497"/>
    </ligand>
</feature>
<feature type="binding site" evidence="1 5">
    <location>
        <position position="248"/>
    </location>
    <ligand>
        <name>beta-D-galactofuranose</name>
        <dbReference type="ChEBI" id="CHEBI:59497"/>
    </ligand>
</feature>
<feature type="disulfide bond" evidence="1">
    <location>
        <begin position="150"/>
        <end position="214"/>
    </location>
</feature>
<feature type="strand" evidence="6">
    <location>
        <begin position="25"/>
        <end position="30"/>
    </location>
</feature>
<feature type="helix" evidence="6">
    <location>
        <begin position="36"/>
        <end position="52"/>
    </location>
</feature>
<feature type="strand" evidence="6">
    <location>
        <begin position="55"/>
        <end position="60"/>
    </location>
</feature>
<feature type="helix" evidence="6">
    <location>
        <begin position="65"/>
        <end position="78"/>
    </location>
</feature>
<feature type="strand" evidence="6">
    <location>
        <begin position="81"/>
        <end position="85"/>
    </location>
</feature>
<feature type="strand" evidence="6">
    <location>
        <begin position="88"/>
        <end position="92"/>
    </location>
</feature>
<feature type="helix" evidence="6">
    <location>
        <begin position="94"/>
        <end position="102"/>
    </location>
</feature>
<feature type="strand" evidence="6">
    <location>
        <begin position="107"/>
        <end position="112"/>
    </location>
</feature>
<feature type="helix" evidence="6">
    <location>
        <begin position="119"/>
        <end position="121"/>
    </location>
</feature>
<feature type="strand" evidence="6">
    <location>
        <begin position="122"/>
        <end position="127"/>
    </location>
</feature>
<feature type="helix" evidence="6">
    <location>
        <begin position="130"/>
        <end position="145"/>
    </location>
</feature>
<feature type="strand" evidence="6">
    <location>
        <begin position="150"/>
        <end position="156"/>
    </location>
</feature>
<feature type="helix" evidence="6">
    <location>
        <begin position="162"/>
        <end position="174"/>
    </location>
</feature>
<feature type="turn" evidence="6">
    <location>
        <begin position="175"/>
        <end position="177"/>
    </location>
</feature>
<feature type="strand" evidence="6">
    <location>
        <begin position="181"/>
        <end position="188"/>
    </location>
</feature>
<feature type="helix" evidence="6">
    <location>
        <begin position="193"/>
        <end position="206"/>
    </location>
</feature>
<feature type="turn" evidence="6">
    <location>
        <begin position="208"/>
        <end position="212"/>
    </location>
</feature>
<feature type="strand" evidence="6">
    <location>
        <begin position="215"/>
        <end position="220"/>
    </location>
</feature>
<feature type="helix" evidence="6">
    <location>
        <begin position="221"/>
        <end position="233"/>
    </location>
</feature>
<feature type="turn" evidence="6">
    <location>
        <begin position="238"/>
        <end position="240"/>
    </location>
</feature>
<feature type="strand" evidence="6">
    <location>
        <begin position="241"/>
        <end position="248"/>
    </location>
</feature>
<feature type="helix" evidence="6">
    <location>
        <begin position="251"/>
        <end position="258"/>
    </location>
</feature>
<feature type="strand" evidence="6">
    <location>
        <begin position="264"/>
        <end position="267"/>
    </location>
</feature>
<feature type="helix" evidence="6">
    <location>
        <begin position="273"/>
        <end position="286"/>
    </location>
</feature>
<feature type="strand" evidence="6">
    <location>
        <begin position="292"/>
        <end position="295"/>
    </location>
</feature>
<feature type="strand" evidence="6">
    <location>
        <begin position="299"/>
        <end position="301"/>
    </location>
</feature>
<feature type="helix" evidence="6">
    <location>
        <begin position="303"/>
        <end position="305"/>
    </location>
</feature>
<feature type="helix" evidence="6">
    <location>
        <begin position="306"/>
        <end position="312"/>
    </location>
</feature>
<proteinExistence type="evidence at protein level"/>
<evidence type="ECO:0000269" key="1">
    <source>
    </source>
</evidence>
<evidence type="ECO:0000269" key="2">
    <source>
    </source>
</evidence>
<evidence type="ECO:0000305" key="3"/>
<evidence type="ECO:0000305" key="4">
    <source>
    </source>
</evidence>
<evidence type="ECO:0007744" key="5">
    <source>
        <dbReference type="PDB" id="2VK2"/>
    </source>
</evidence>
<evidence type="ECO:0007829" key="6">
    <source>
        <dbReference type="PDB" id="2VK2"/>
    </source>
</evidence>
<name>YTFQ_ECOLI</name>
<reference key="1">
    <citation type="journal article" date="1995" name="Nucleic Acids Res.">
        <title>Analysis of the Escherichia coli genome VI: DNA sequence of the region from 92.8 through 100 minutes.</title>
        <authorList>
            <person name="Burland V.D."/>
            <person name="Plunkett G. III"/>
            <person name="Sofia H.J."/>
            <person name="Daniels D.L."/>
            <person name="Blattner F.R."/>
        </authorList>
    </citation>
    <scope>NUCLEOTIDE SEQUENCE [LARGE SCALE GENOMIC DNA]</scope>
    <source>
        <strain>K12 / MG1655 / ATCC 47076</strain>
    </source>
</reference>
<reference key="2">
    <citation type="journal article" date="1997" name="Science">
        <title>The complete genome sequence of Escherichia coli K-12.</title>
        <authorList>
            <person name="Blattner F.R."/>
            <person name="Plunkett G. III"/>
            <person name="Bloch C.A."/>
            <person name="Perna N.T."/>
            <person name="Burland V."/>
            <person name="Riley M."/>
            <person name="Collado-Vides J."/>
            <person name="Glasner J.D."/>
            <person name="Rode C.K."/>
            <person name="Mayhew G.F."/>
            <person name="Gregor J."/>
            <person name="Davis N.W."/>
            <person name="Kirkpatrick H.A."/>
            <person name="Goeden M.A."/>
            <person name="Rose D.J."/>
            <person name="Mau B."/>
            <person name="Shao Y."/>
        </authorList>
    </citation>
    <scope>NUCLEOTIDE SEQUENCE [LARGE SCALE GENOMIC DNA]</scope>
    <source>
        <strain>K12 / MG1655 / ATCC 47076</strain>
    </source>
</reference>
<reference key="3">
    <citation type="journal article" date="2006" name="Mol. Syst. Biol.">
        <title>Highly accurate genome sequences of Escherichia coli K-12 strains MG1655 and W3110.</title>
        <authorList>
            <person name="Hayashi K."/>
            <person name="Morooka N."/>
            <person name="Yamamoto Y."/>
            <person name="Fujita K."/>
            <person name="Isono K."/>
            <person name="Choi S."/>
            <person name="Ohtsubo E."/>
            <person name="Baba T."/>
            <person name="Wanner B.L."/>
            <person name="Mori H."/>
            <person name="Horiuchi T."/>
        </authorList>
    </citation>
    <scope>NUCLEOTIDE SEQUENCE [LARGE SCALE GENOMIC DNA]</scope>
    <source>
        <strain>K12 / W3110 / ATCC 27325 / DSM 5911</strain>
    </source>
</reference>
<reference key="4">
    <citation type="journal article" date="1997" name="Electrophoresis">
        <title>Comparing the predicted and observed properties of proteins encoded in the genome of Escherichia coli K-12.</title>
        <authorList>
            <person name="Link A.J."/>
            <person name="Robison K."/>
            <person name="Church G.M."/>
        </authorList>
    </citation>
    <scope>PROTEIN SEQUENCE OF 22-33</scope>
    <source>
        <strain>K12 / EMG2</strain>
    </source>
</reference>
<reference evidence="5" key="5">
    <citation type="journal article" date="2009" name="J. Biol. Chem.">
        <title>Furanose-specific sugar transport: characterization of a bacterial galactofuranose-binding protein.</title>
        <authorList>
            <person name="Horler R.S."/>
            <person name="Muller A."/>
            <person name="Williamson D.C."/>
            <person name="Potts J.R."/>
            <person name="Wilson K.S."/>
            <person name="Thomas G.H."/>
        </authorList>
    </citation>
    <scope>X-RAY CRYSTALLOGRAPHY (1.20 ANGSTROMS) OF 22-318 IN COMPLEX WITH BETA-D-GALACTOFURANOSE</scope>
    <scope>FUNCTION</scope>
    <scope>SUBUNIT</scope>
    <scope>SUBCELLULAR LOCATION</scope>
    <scope>DISULFIDE BOND</scope>
    <source>
        <strain>K12</strain>
    </source>
</reference>
<protein>
    <recommendedName>
        <fullName evidence="3">Galactofuranose-binding protein YtfQ</fullName>
    </recommendedName>
</protein>
<comment type="function">
    <text evidence="1 4">Part of the ABC transporter complex YtfQRT-YjfF involved in galactofuranose transport (Probable). Binds to both alpha- and beta-galactofuranose (PubMed:19744923).</text>
</comment>
<comment type="subunit">
    <text evidence="4">The complex is composed of two ATP-binding proteins (YtfR), two transmembrane proteins (YtfT and YjfF) and a solute-binding protein (YtfQ).</text>
</comment>
<comment type="subcellular location">
    <subcellularLocation>
        <location evidence="1">Periplasm</location>
    </subcellularLocation>
</comment>
<comment type="similarity">
    <text evidence="3">Belongs to the bacterial solute-binding protein 2 family.</text>
</comment>
<gene>
    <name type="primary">ytfQ</name>
    <name type="ordered locus">b4227</name>
    <name type="ordered locus">JW4186</name>
</gene>
<accession>P39325</accession>
<accession>Q2M678</accession>
<organism>
    <name type="scientific">Escherichia coli (strain K12)</name>
    <dbReference type="NCBI Taxonomy" id="83333"/>
    <lineage>
        <taxon>Bacteria</taxon>
        <taxon>Pseudomonadati</taxon>
        <taxon>Pseudomonadota</taxon>
        <taxon>Gammaproteobacteria</taxon>
        <taxon>Enterobacterales</taxon>
        <taxon>Enterobacteriaceae</taxon>
        <taxon>Escherichia</taxon>
    </lineage>
</organism>